<accession>A1K9C8</accession>
<name>BIOB_AZOSB</name>
<gene>
    <name evidence="1" type="primary">bioB</name>
    <name type="ordered locus">azo2817</name>
</gene>
<feature type="chain" id="PRO_0000381212" description="Biotin synthase">
    <location>
        <begin position="1"/>
        <end position="326"/>
    </location>
</feature>
<feature type="domain" description="Radical SAM core" evidence="2">
    <location>
        <begin position="51"/>
        <end position="278"/>
    </location>
</feature>
<feature type="binding site" evidence="1">
    <location>
        <position position="66"/>
    </location>
    <ligand>
        <name>[4Fe-4S] cluster</name>
        <dbReference type="ChEBI" id="CHEBI:49883"/>
        <note>4Fe-4S-S-AdoMet</note>
    </ligand>
</feature>
<feature type="binding site" evidence="1">
    <location>
        <position position="70"/>
    </location>
    <ligand>
        <name>[4Fe-4S] cluster</name>
        <dbReference type="ChEBI" id="CHEBI:49883"/>
        <note>4Fe-4S-S-AdoMet</note>
    </ligand>
</feature>
<feature type="binding site" evidence="1">
    <location>
        <position position="73"/>
    </location>
    <ligand>
        <name>[4Fe-4S] cluster</name>
        <dbReference type="ChEBI" id="CHEBI:49883"/>
        <note>4Fe-4S-S-AdoMet</note>
    </ligand>
</feature>
<feature type="binding site" evidence="1">
    <location>
        <position position="110"/>
    </location>
    <ligand>
        <name>[2Fe-2S] cluster</name>
        <dbReference type="ChEBI" id="CHEBI:190135"/>
    </ligand>
</feature>
<feature type="binding site" evidence="1">
    <location>
        <position position="141"/>
    </location>
    <ligand>
        <name>[2Fe-2S] cluster</name>
        <dbReference type="ChEBI" id="CHEBI:190135"/>
    </ligand>
</feature>
<feature type="binding site" evidence="1">
    <location>
        <position position="201"/>
    </location>
    <ligand>
        <name>[2Fe-2S] cluster</name>
        <dbReference type="ChEBI" id="CHEBI:190135"/>
    </ligand>
</feature>
<feature type="binding site" evidence="1">
    <location>
        <position position="273"/>
    </location>
    <ligand>
        <name>[2Fe-2S] cluster</name>
        <dbReference type="ChEBI" id="CHEBI:190135"/>
    </ligand>
</feature>
<sequence>MTTTLTAPTPAAAEAPRKKWTVAEVQALFDLPFLDLVFQAQQVHRAHFAANEVQRSTLLSIKTGGCSEDCGYCSQSARYDTGLERERLLPLDEVLEHARAAKAKGSSRFCMGAAWRGPKDKDMAPVLEMVREVKKLGLETCVTLGMLKEGQAEQLAEAGLDYYNHNIDTAPEFYGQIVTTHTLQDRLDTLDKVRDAGINVCCGGIVGMGETQTSRAGLIAQLANMTPPPDSVPINNLVAIPGTPLADGGTIDGFDFVRTIAAARITMPTSYVRLSAGRQQMSDEMQALCFMAGANSIFYGERLLTTDNPESDRDDVLFARLGLRSV</sequence>
<protein>
    <recommendedName>
        <fullName evidence="1">Biotin synthase</fullName>
        <ecNumber evidence="1">2.8.1.6</ecNumber>
    </recommendedName>
</protein>
<evidence type="ECO:0000255" key="1">
    <source>
        <dbReference type="HAMAP-Rule" id="MF_01694"/>
    </source>
</evidence>
<evidence type="ECO:0000255" key="2">
    <source>
        <dbReference type="PROSITE-ProRule" id="PRU01266"/>
    </source>
</evidence>
<comment type="function">
    <text evidence="1">Catalyzes the conversion of dethiobiotin (DTB) to biotin by the insertion of a sulfur atom into dethiobiotin via a radical-based mechanism.</text>
</comment>
<comment type="catalytic activity">
    <reaction evidence="1">
        <text>(4R,5S)-dethiobiotin + (sulfur carrier)-SH + 2 reduced [2Fe-2S]-[ferredoxin] + 2 S-adenosyl-L-methionine = (sulfur carrier)-H + biotin + 2 5'-deoxyadenosine + 2 L-methionine + 2 oxidized [2Fe-2S]-[ferredoxin]</text>
        <dbReference type="Rhea" id="RHEA:22060"/>
        <dbReference type="Rhea" id="RHEA-COMP:10000"/>
        <dbReference type="Rhea" id="RHEA-COMP:10001"/>
        <dbReference type="Rhea" id="RHEA-COMP:14737"/>
        <dbReference type="Rhea" id="RHEA-COMP:14739"/>
        <dbReference type="ChEBI" id="CHEBI:17319"/>
        <dbReference type="ChEBI" id="CHEBI:29917"/>
        <dbReference type="ChEBI" id="CHEBI:33737"/>
        <dbReference type="ChEBI" id="CHEBI:33738"/>
        <dbReference type="ChEBI" id="CHEBI:57586"/>
        <dbReference type="ChEBI" id="CHEBI:57844"/>
        <dbReference type="ChEBI" id="CHEBI:59789"/>
        <dbReference type="ChEBI" id="CHEBI:64428"/>
        <dbReference type="ChEBI" id="CHEBI:149473"/>
        <dbReference type="EC" id="2.8.1.6"/>
    </reaction>
</comment>
<comment type="cofactor">
    <cofactor evidence="1">
        <name>[4Fe-4S] cluster</name>
        <dbReference type="ChEBI" id="CHEBI:49883"/>
    </cofactor>
    <text evidence="1">Binds 1 [4Fe-4S] cluster. The cluster is coordinated with 3 cysteines and an exchangeable S-adenosyl-L-methionine.</text>
</comment>
<comment type="cofactor">
    <cofactor evidence="1">
        <name>[2Fe-2S] cluster</name>
        <dbReference type="ChEBI" id="CHEBI:190135"/>
    </cofactor>
    <text evidence="1">Binds 1 [2Fe-2S] cluster. The cluster is coordinated with 3 cysteines and 1 arginine.</text>
</comment>
<comment type="pathway">
    <text evidence="1">Cofactor biosynthesis; biotin biosynthesis; biotin from 7,8-diaminononanoate: step 2/2.</text>
</comment>
<comment type="subunit">
    <text evidence="1">Homodimer.</text>
</comment>
<comment type="similarity">
    <text evidence="1">Belongs to the radical SAM superfamily. Biotin synthase family.</text>
</comment>
<keyword id="KW-0001">2Fe-2S</keyword>
<keyword id="KW-0004">4Fe-4S</keyword>
<keyword id="KW-0093">Biotin biosynthesis</keyword>
<keyword id="KW-0408">Iron</keyword>
<keyword id="KW-0411">Iron-sulfur</keyword>
<keyword id="KW-0479">Metal-binding</keyword>
<keyword id="KW-1185">Reference proteome</keyword>
<keyword id="KW-0949">S-adenosyl-L-methionine</keyword>
<keyword id="KW-0808">Transferase</keyword>
<reference key="1">
    <citation type="journal article" date="2006" name="Nat. Biotechnol.">
        <title>Complete genome of the mutualistic, N2-fixing grass endophyte Azoarcus sp. strain BH72.</title>
        <authorList>
            <person name="Krause A."/>
            <person name="Ramakumar A."/>
            <person name="Bartels D."/>
            <person name="Battistoni F."/>
            <person name="Bekel T."/>
            <person name="Boch J."/>
            <person name="Boehm M."/>
            <person name="Friedrich F."/>
            <person name="Hurek T."/>
            <person name="Krause L."/>
            <person name="Linke B."/>
            <person name="McHardy A.C."/>
            <person name="Sarkar A."/>
            <person name="Schneiker S."/>
            <person name="Syed A.A."/>
            <person name="Thauer R."/>
            <person name="Vorhoelter F.-J."/>
            <person name="Weidner S."/>
            <person name="Puehler A."/>
            <person name="Reinhold-Hurek B."/>
            <person name="Kaiser O."/>
            <person name="Goesmann A."/>
        </authorList>
    </citation>
    <scope>NUCLEOTIDE SEQUENCE [LARGE SCALE GENOMIC DNA]</scope>
    <source>
        <strain>BH72</strain>
    </source>
</reference>
<dbReference type="EC" id="2.8.1.6" evidence="1"/>
<dbReference type="EMBL" id="AM406670">
    <property type="protein sequence ID" value="CAL95433.1"/>
    <property type="molecule type" value="Genomic_DNA"/>
</dbReference>
<dbReference type="RefSeq" id="WP_011766543.1">
    <property type="nucleotide sequence ID" value="NC_008702.1"/>
</dbReference>
<dbReference type="SMR" id="A1K9C8"/>
<dbReference type="STRING" id="62928.azo2817"/>
<dbReference type="KEGG" id="azo:azo2817"/>
<dbReference type="eggNOG" id="COG0502">
    <property type="taxonomic scope" value="Bacteria"/>
</dbReference>
<dbReference type="HOGENOM" id="CLU_033172_1_2_4"/>
<dbReference type="UniPathway" id="UPA00078">
    <property type="reaction ID" value="UER00162"/>
</dbReference>
<dbReference type="Proteomes" id="UP000002588">
    <property type="component" value="Chromosome"/>
</dbReference>
<dbReference type="GO" id="GO:0051537">
    <property type="term" value="F:2 iron, 2 sulfur cluster binding"/>
    <property type="evidence" value="ECO:0007669"/>
    <property type="project" value="UniProtKB-KW"/>
</dbReference>
<dbReference type="GO" id="GO:0051539">
    <property type="term" value="F:4 iron, 4 sulfur cluster binding"/>
    <property type="evidence" value="ECO:0007669"/>
    <property type="project" value="UniProtKB-KW"/>
</dbReference>
<dbReference type="GO" id="GO:0004076">
    <property type="term" value="F:biotin synthase activity"/>
    <property type="evidence" value="ECO:0007669"/>
    <property type="project" value="UniProtKB-UniRule"/>
</dbReference>
<dbReference type="GO" id="GO:0005506">
    <property type="term" value="F:iron ion binding"/>
    <property type="evidence" value="ECO:0007669"/>
    <property type="project" value="UniProtKB-UniRule"/>
</dbReference>
<dbReference type="GO" id="GO:0009102">
    <property type="term" value="P:biotin biosynthetic process"/>
    <property type="evidence" value="ECO:0007669"/>
    <property type="project" value="UniProtKB-UniRule"/>
</dbReference>
<dbReference type="CDD" id="cd01335">
    <property type="entry name" value="Radical_SAM"/>
    <property type="match status" value="1"/>
</dbReference>
<dbReference type="FunFam" id="3.20.20.70:FF:000011">
    <property type="entry name" value="Biotin synthase"/>
    <property type="match status" value="1"/>
</dbReference>
<dbReference type="Gene3D" id="3.20.20.70">
    <property type="entry name" value="Aldolase class I"/>
    <property type="match status" value="1"/>
</dbReference>
<dbReference type="HAMAP" id="MF_01694">
    <property type="entry name" value="BioB"/>
    <property type="match status" value="1"/>
</dbReference>
<dbReference type="InterPro" id="IPR013785">
    <property type="entry name" value="Aldolase_TIM"/>
</dbReference>
<dbReference type="InterPro" id="IPR010722">
    <property type="entry name" value="BATS_dom"/>
</dbReference>
<dbReference type="InterPro" id="IPR002684">
    <property type="entry name" value="Biotin_synth/BioAB"/>
</dbReference>
<dbReference type="InterPro" id="IPR024177">
    <property type="entry name" value="Biotin_synthase"/>
</dbReference>
<dbReference type="InterPro" id="IPR006638">
    <property type="entry name" value="Elp3/MiaA/NifB-like_rSAM"/>
</dbReference>
<dbReference type="InterPro" id="IPR007197">
    <property type="entry name" value="rSAM"/>
</dbReference>
<dbReference type="NCBIfam" id="TIGR00433">
    <property type="entry name" value="bioB"/>
    <property type="match status" value="1"/>
</dbReference>
<dbReference type="PANTHER" id="PTHR22976">
    <property type="entry name" value="BIOTIN SYNTHASE"/>
    <property type="match status" value="1"/>
</dbReference>
<dbReference type="PANTHER" id="PTHR22976:SF2">
    <property type="entry name" value="BIOTIN SYNTHASE, MITOCHONDRIAL"/>
    <property type="match status" value="1"/>
</dbReference>
<dbReference type="Pfam" id="PF06968">
    <property type="entry name" value="BATS"/>
    <property type="match status" value="1"/>
</dbReference>
<dbReference type="Pfam" id="PF04055">
    <property type="entry name" value="Radical_SAM"/>
    <property type="match status" value="1"/>
</dbReference>
<dbReference type="PIRSF" id="PIRSF001619">
    <property type="entry name" value="Biotin_synth"/>
    <property type="match status" value="1"/>
</dbReference>
<dbReference type="SFLD" id="SFLDF00272">
    <property type="entry name" value="biotin_synthase"/>
    <property type="match status" value="1"/>
</dbReference>
<dbReference type="SFLD" id="SFLDS00029">
    <property type="entry name" value="Radical_SAM"/>
    <property type="match status" value="1"/>
</dbReference>
<dbReference type="SMART" id="SM00876">
    <property type="entry name" value="BATS"/>
    <property type="match status" value="1"/>
</dbReference>
<dbReference type="SMART" id="SM00729">
    <property type="entry name" value="Elp3"/>
    <property type="match status" value="1"/>
</dbReference>
<dbReference type="SUPFAM" id="SSF102114">
    <property type="entry name" value="Radical SAM enzymes"/>
    <property type="match status" value="1"/>
</dbReference>
<dbReference type="PROSITE" id="PS51918">
    <property type="entry name" value="RADICAL_SAM"/>
    <property type="match status" value="1"/>
</dbReference>
<organism>
    <name type="scientific">Azoarcus sp. (strain BH72)</name>
    <dbReference type="NCBI Taxonomy" id="418699"/>
    <lineage>
        <taxon>Bacteria</taxon>
        <taxon>Pseudomonadati</taxon>
        <taxon>Pseudomonadota</taxon>
        <taxon>Betaproteobacteria</taxon>
        <taxon>Rhodocyclales</taxon>
        <taxon>Zoogloeaceae</taxon>
        <taxon>Azoarcus</taxon>
    </lineage>
</organism>
<proteinExistence type="inferred from homology"/>